<accession>Q5HPB6</accession>
<name>Y997_STAEQ</name>
<comment type="similarity">
    <text evidence="1">Belongs to the UPF0346 family.</text>
</comment>
<proteinExistence type="inferred from homology"/>
<organism>
    <name type="scientific">Staphylococcus epidermidis (strain ATCC 35984 / DSM 28319 / BCRC 17069 / CCUG 31568 / BM 3577 / RP62A)</name>
    <dbReference type="NCBI Taxonomy" id="176279"/>
    <lineage>
        <taxon>Bacteria</taxon>
        <taxon>Bacillati</taxon>
        <taxon>Bacillota</taxon>
        <taxon>Bacilli</taxon>
        <taxon>Bacillales</taxon>
        <taxon>Staphylococcaceae</taxon>
        <taxon>Staphylococcus</taxon>
    </lineage>
</organism>
<reference key="1">
    <citation type="journal article" date="2005" name="J. Bacteriol.">
        <title>Insights on evolution of virulence and resistance from the complete genome analysis of an early methicillin-resistant Staphylococcus aureus strain and a biofilm-producing methicillin-resistant Staphylococcus epidermidis strain.</title>
        <authorList>
            <person name="Gill S.R."/>
            <person name="Fouts D.E."/>
            <person name="Archer G.L."/>
            <person name="Mongodin E.F."/>
            <person name="DeBoy R.T."/>
            <person name="Ravel J."/>
            <person name="Paulsen I.T."/>
            <person name="Kolonay J.F."/>
            <person name="Brinkac L.M."/>
            <person name="Beanan M.J."/>
            <person name="Dodson R.J."/>
            <person name="Daugherty S.C."/>
            <person name="Madupu R."/>
            <person name="Angiuoli S.V."/>
            <person name="Durkin A.S."/>
            <person name="Haft D.H."/>
            <person name="Vamathevan J.J."/>
            <person name="Khouri H."/>
            <person name="Utterback T.R."/>
            <person name="Lee C."/>
            <person name="Dimitrov G."/>
            <person name="Jiang L."/>
            <person name="Qin H."/>
            <person name="Weidman J."/>
            <person name="Tran K."/>
            <person name="Kang K.H."/>
            <person name="Hance I.R."/>
            <person name="Nelson K.E."/>
            <person name="Fraser C.M."/>
        </authorList>
    </citation>
    <scope>NUCLEOTIDE SEQUENCE [LARGE SCALE GENOMIC DNA]</scope>
    <source>
        <strain>ATCC 35984 / DSM 28319 / BCRC 17069 / CCUG 31568 / BM 3577 / RP62A</strain>
    </source>
</reference>
<evidence type="ECO:0000255" key="1">
    <source>
        <dbReference type="HAMAP-Rule" id="MF_01538"/>
    </source>
</evidence>
<sequence>MVKNYSFYQFIMTVRGRKDDKGVFAEQIFEDLAFPKHEDDFNTLSEYIETHSEFTLPMSVFDDLYDDYTEWLKF</sequence>
<feature type="chain" id="PRO_0000164289" description="UPF0346 protein SERP0997">
    <location>
        <begin position="1"/>
        <end position="74"/>
    </location>
</feature>
<protein>
    <recommendedName>
        <fullName evidence="1">UPF0346 protein SERP0997</fullName>
    </recommendedName>
</protein>
<keyword id="KW-1185">Reference proteome</keyword>
<gene>
    <name type="ordered locus">SERP0997</name>
</gene>
<dbReference type="EMBL" id="CP000029">
    <property type="protein sequence ID" value="AAW54359.1"/>
    <property type="molecule type" value="Genomic_DNA"/>
</dbReference>
<dbReference type="RefSeq" id="WP_001831241.1">
    <property type="nucleotide sequence ID" value="NC_002976.3"/>
</dbReference>
<dbReference type="SMR" id="Q5HPB6"/>
<dbReference type="STRING" id="176279.SERP0997"/>
<dbReference type="KEGG" id="ser:SERP0997"/>
<dbReference type="eggNOG" id="COG4479">
    <property type="taxonomic scope" value="Bacteria"/>
</dbReference>
<dbReference type="HOGENOM" id="CLU_177534_1_0_9"/>
<dbReference type="Proteomes" id="UP000000531">
    <property type="component" value="Chromosome"/>
</dbReference>
<dbReference type="Gene3D" id="1.10.150.260">
    <property type="entry name" value="YozE SAM-like"/>
    <property type="match status" value="1"/>
</dbReference>
<dbReference type="HAMAP" id="MF_01538">
    <property type="entry name" value="UPF0346"/>
    <property type="match status" value="1"/>
</dbReference>
<dbReference type="InterPro" id="IPR010673">
    <property type="entry name" value="UPF0346"/>
</dbReference>
<dbReference type="InterPro" id="IPR023089">
    <property type="entry name" value="YozE_SAM-like"/>
</dbReference>
<dbReference type="InterPro" id="IPR036806">
    <property type="entry name" value="YozE_SAM-like_sf"/>
</dbReference>
<dbReference type="NCBIfam" id="NF010193">
    <property type="entry name" value="PRK13672.1"/>
    <property type="match status" value="1"/>
</dbReference>
<dbReference type="Pfam" id="PF06855">
    <property type="entry name" value="YozE_SAM_like"/>
    <property type="match status" value="1"/>
</dbReference>
<dbReference type="PIRSF" id="PIRSF037262">
    <property type="entry name" value="UCP037262"/>
    <property type="match status" value="1"/>
</dbReference>
<dbReference type="SUPFAM" id="SSF140652">
    <property type="entry name" value="YozE-like"/>
    <property type="match status" value="1"/>
</dbReference>